<protein>
    <recommendedName>
        <fullName evidence="1">Small ribosomal subunit protein uS11</fullName>
    </recommendedName>
    <alternativeName>
        <fullName evidence="2">30S ribosomal protein S11</fullName>
    </alternativeName>
</protein>
<feature type="chain" id="PRO_1000141089" description="Small ribosomal subunit protein uS11">
    <location>
        <begin position="1"/>
        <end position="129"/>
    </location>
</feature>
<proteinExistence type="inferred from homology"/>
<organism>
    <name type="scientific">Escherichia coli O7:K1 (strain IAI39 / ExPEC)</name>
    <dbReference type="NCBI Taxonomy" id="585057"/>
    <lineage>
        <taxon>Bacteria</taxon>
        <taxon>Pseudomonadati</taxon>
        <taxon>Pseudomonadota</taxon>
        <taxon>Gammaproteobacteria</taxon>
        <taxon>Enterobacterales</taxon>
        <taxon>Enterobacteriaceae</taxon>
        <taxon>Escherichia</taxon>
    </lineage>
</organism>
<gene>
    <name evidence="1" type="primary">rpsK</name>
    <name type="ordered locus">ECIAI39_3792</name>
</gene>
<comment type="function">
    <text evidence="1">Located on the platform of the 30S subunit, it bridges several disparate RNA helices of the 16S rRNA. Forms part of the Shine-Dalgarno cleft in the 70S ribosome.</text>
</comment>
<comment type="subunit">
    <text evidence="1">Part of the 30S ribosomal subunit. Interacts with proteins S7 and S18. Binds to IF-3.</text>
</comment>
<comment type="similarity">
    <text evidence="1">Belongs to the universal ribosomal protein uS11 family.</text>
</comment>
<reference key="1">
    <citation type="journal article" date="2009" name="PLoS Genet.">
        <title>Organised genome dynamics in the Escherichia coli species results in highly diverse adaptive paths.</title>
        <authorList>
            <person name="Touchon M."/>
            <person name="Hoede C."/>
            <person name="Tenaillon O."/>
            <person name="Barbe V."/>
            <person name="Baeriswyl S."/>
            <person name="Bidet P."/>
            <person name="Bingen E."/>
            <person name="Bonacorsi S."/>
            <person name="Bouchier C."/>
            <person name="Bouvet O."/>
            <person name="Calteau A."/>
            <person name="Chiapello H."/>
            <person name="Clermont O."/>
            <person name="Cruveiller S."/>
            <person name="Danchin A."/>
            <person name="Diard M."/>
            <person name="Dossat C."/>
            <person name="Karoui M.E."/>
            <person name="Frapy E."/>
            <person name="Garry L."/>
            <person name="Ghigo J.M."/>
            <person name="Gilles A.M."/>
            <person name="Johnson J."/>
            <person name="Le Bouguenec C."/>
            <person name="Lescat M."/>
            <person name="Mangenot S."/>
            <person name="Martinez-Jehanne V."/>
            <person name="Matic I."/>
            <person name="Nassif X."/>
            <person name="Oztas S."/>
            <person name="Petit M.A."/>
            <person name="Pichon C."/>
            <person name="Rouy Z."/>
            <person name="Ruf C.S."/>
            <person name="Schneider D."/>
            <person name="Tourret J."/>
            <person name="Vacherie B."/>
            <person name="Vallenet D."/>
            <person name="Medigue C."/>
            <person name="Rocha E.P.C."/>
            <person name="Denamur E."/>
        </authorList>
    </citation>
    <scope>NUCLEOTIDE SEQUENCE [LARGE SCALE GENOMIC DNA]</scope>
    <source>
        <strain>IAI39 / ExPEC</strain>
    </source>
</reference>
<sequence length="129" mass="13845">MAKAPIRARKRVRKQVSDGVAHIHASFNNTIVTITDRQGNALGWATAGGSGFRGSRKSTPFAAQVAAERCADAVKEYGIKNLEVMVKGPGPGRESTIRALNAAGFRITNITDVTPIPHNGCRPPKKRRV</sequence>
<name>RS11_ECO7I</name>
<evidence type="ECO:0000255" key="1">
    <source>
        <dbReference type="HAMAP-Rule" id="MF_01310"/>
    </source>
</evidence>
<evidence type="ECO:0000305" key="2"/>
<dbReference type="EMBL" id="CU928164">
    <property type="protein sequence ID" value="CAR19906.1"/>
    <property type="molecule type" value="Genomic_DNA"/>
</dbReference>
<dbReference type="RefSeq" id="WP_001029684.1">
    <property type="nucleotide sequence ID" value="NC_011750.1"/>
</dbReference>
<dbReference type="RefSeq" id="YP_002409689.1">
    <property type="nucleotide sequence ID" value="NC_011750.1"/>
</dbReference>
<dbReference type="SMR" id="B7NLL7"/>
<dbReference type="STRING" id="585057.ECIAI39_3792"/>
<dbReference type="GeneID" id="93778690"/>
<dbReference type="KEGG" id="ect:ECIAI39_3792"/>
<dbReference type="PATRIC" id="fig|585057.6.peg.3928"/>
<dbReference type="HOGENOM" id="CLU_072439_5_0_6"/>
<dbReference type="PRO" id="PR:B7NLL7"/>
<dbReference type="Proteomes" id="UP000000749">
    <property type="component" value="Chromosome"/>
</dbReference>
<dbReference type="GO" id="GO:1990904">
    <property type="term" value="C:ribonucleoprotein complex"/>
    <property type="evidence" value="ECO:0007669"/>
    <property type="project" value="UniProtKB-KW"/>
</dbReference>
<dbReference type="GO" id="GO:0005840">
    <property type="term" value="C:ribosome"/>
    <property type="evidence" value="ECO:0007669"/>
    <property type="project" value="UniProtKB-KW"/>
</dbReference>
<dbReference type="GO" id="GO:0019843">
    <property type="term" value="F:rRNA binding"/>
    <property type="evidence" value="ECO:0007669"/>
    <property type="project" value="UniProtKB-UniRule"/>
</dbReference>
<dbReference type="GO" id="GO:0003735">
    <property type="term" value="F:structural constituent of ribosome"/>
    <property type="evidence" value="ECO:0007669"/>
    <property type="project" value="InterPro"/>
</dbReference>
<dbReference type="GO" id="GO:0006412">
    <property type="term" value="P:translation"/>
    <property type="evidence" value="ECO:0007669"/>
    <property type="project" value="UniProtKB-UniRule"/>
</dbReference>
<dbReference type="FunFam" id="3.30.420.80:FF:000001">
    <property type="entry name" value="30S ribosomal protein S11"/>
    <property type="match status" value="1"/>
</dbReference>
<dbReference type="Gene3D" id="3.30.420.80">
    <property type="entry name" value="Ribosomal protein S11"/>
    <property type="match status" value="1"/>
</dbReference>
<dbReference type="HAMAP" id="MF_01310">
    <property type="entry name" value="Ribosomal_uS11"/>
    <property type="match status" value="1"/>
</dbReference>
<dbReference type="InterPro" id="IPR001971">
    <property type="entry name" value="Ribosomal_uS11"/>
</dbReference>
<dbReference type="InterPro" id="IPR019981">
    <property type="entry name" value="Ribosomal_uS11_bac-type"/>
</dbReference>
<dbReference type="InterPro" id="IPR018102">
    <property type="entry name" value="Ribosomal_uS11_CS"/>
</dbReference>
<dbReference type="InterPro" id="IPR036967">
    <property type="entry name" value="Ribosomal_uS11_sf"/>
</dbReference>
<dbReference type="NCBIfam" id="NF003698">
    <property type="entry name" value="PRK05309.1"/>
    <property type="match status" value="1"/>
</dbReference>
<dbReference type="NCBIfam" id="TIGR03632">
    <property type="entry name" value="uS11_bact"/>
    <property type="match status" value="1"/>
</dbReference>
<dbReference type="PANTHER" id="PTHR11759">
    <property type="entry name" value="40S RIBOSOMAL PROTEIN S14/30S RIBOSOMAL PROTEIN S11"/>
    <property type="match status" value="1"/>
</dbReference>
<dbReference type="Pfam" id="PF00411">
    <property type="entry name" value="Ribosomal_S11"/>
    <property type="match status" value="1"/>
</dbReference>
<dbReference type="PIRSF" id="PIRSF002131">
    <property type="entry name" value="Ribosomal_S11"/>
    <property type="match status" value="1"/>
</dbReference>
<dbReference type="SUPFAM" id="SSF53137">
    <property type="entry name" value="Translational machinery components"/>
    <property type="match status" value="1"/>
</dbReference>
<dbReference type="PROSITE" id="PS00054">
    <property type="entry name" value="RIBOSOMAL_S11"/>
    <property type="match status" value="1"/>
</dbReference>
<accession>B7NLL7</accession>
<keyword id="KW-0687">Ribonucleoprotein</keyword>
<keyword id="KW-0689">Ribosomal protein</keyword>
<keyword id="KW-0694">RNA-binding</keyword>
<keyword id="KW-0699">rRNA-binding</keyword>